<name>PTH_MOUSE</name>
<proteinExistence type="evidence at transcript level"/>
<feature type="chain" id="PRO_0000240442" description="Probable peptidyl-tRNA hydrolase">
    <location>
        <begin position="1"/>
        <end position="204"/>
    </location>
</feature>
<feature type="active site" description="Proton acceptor" evidence="1">
    <location>
        <position position="36"/>
    </location>
</feature>
<feature type="binding site" evidence="1">
    <location>
        <position position="86"/>
    </location>
    <ligand>
        <name>tRNA</name>
        <dbReference type="ChEBI" id="CHEBI:17843"/>
    </ligand>
</feature>
<feature type="binding site" evidence="1">
    <location>
        <position position="132"/>
    </location>
    <ligand>
        <name>tRNA</name>
        <dbReference type="ChEBI" id="CHEBI:17843"/>
    </ligand>
</feature>
<feature type="site" description="Stabilizes the basic form of H active site to accept a proton" evidence="1">
    <location>
        <position position="111"/>
    </location>
</feature>
<gene>
    <name evidence="4" type="primary">Ptrh1</name>
</gene>
<accession>Q8BW00</accession>
<comment type="function">
    <text evidence="2">Peptidyl-tRNA hydrolase that cleaves nascent chains-tRNAs that are not stably fixed in the P-site of 60S ribosome-nascent chain complexes (By similarity). Acts downstream of the ribosome-associated quality control (RQC) pathway to release non-ubiquitinated nascent chains from 60S and 80S ribosome-nascent chain complexes (By similarity). Does not act on ubiquitinated nascent chains, which are cleaved by ANKZF1 for degradation (By similarity).</text>
</comment>
<comment type="catalytic activity">
    <reaction evidence="2">
        <text>an N-acyl-L-alpha-aminoacyl-tRNA + H2O = an N-acyl-L-amino acid + a tRNA + H(+)</text>
        <dbReference type="Rhea" id="RHEA:54448"/>
        <dbReference type="Rhea" id="RHEA-COMP:10123"/>
        <dbReference type="Rhea" id="RHEA-COMP:13883"/>
        <dbReference type="ChEBI" id="CHEBI:15377"/>
        <dbReference type="ChEBI" id="CHEBI:15378"/>
        <dbReference type="ChEBI" id="CHEBI:59874"/>
        <dbReference type="ChEBI" id="CHEBI:78442"/>
        <dbReference type="ChEBI" id="CHEBI:138191"/>
        <dbReference type="EC" id="3.1.1.29"/>
    </reaction>
    <physiologicalReaction direction="left-to-right" evidence="2">
        <dbReference type="Rhea" id="RHEA:54449"/>
    </physiologicalReaction>
</comment>
<comment type="similarity">
    <text evidence="3">Belongs to the PTH family.</text>
</comment>
<dbReference type="EC" id="3.1.1.29" evidence="2"/>
<dbReference type="EMBL" id="AK075833">
    <property type="protein sequence ID" value="BAC35994.1"/>
    <property type="molecule type" value="mRNA"/>
</dbReference>
<dbReference type="EMBL" id="BC098218">
    <property type="protein sequence ID" value="AAH98218.1"/>
    <property type="molecule type" value="mRNA"/>
</dbReference>
<dbReference type="CCDS" id="CCDS15931.1"/>
<dbReference type="RefSeq" id="NP_848710.1">
    <property type="nucleotide sequence ID" value="NM_178595.4"/>
</dbReference>
<dbReference type="SMR" id="Q8BW00"/>
<dbReference type="FunCoup" id="Q8BW00">
    <property type="interactions" value="538"/>
</dbReference>
<dbReference type="STRING" id="10090.ENSMUSP00000068850"/>
<dbReference type="iPTMnet" id="Q8BW00"/>
<dbReference type="PhosphoSitePlus" id="Q8BW00"/>
<dbReference type="PaxDb" id="10090-ENSMUSP00000068850"/>
<dbReference type="PeptideAtlas" id="Q8BW00"/>
<dbReference type="ProteomicsDB" id="291627"/>
<dbReference type="Pumba" id="Q8BW00"/>
<dbReference type="Antibodypedia" id="17102">
    <property type="antibodies" value="106 antibodies from 17 providers"/>
</dbReference>
<dbReference type="Ensembl" id="ENSMUST00000066352.6">
    <property type="protein sequence ID" value="ENSMUSP00000068850.6"/>
    <property type="gene ID" value="ENSMUSG00000053746.9"/>
</dbReference>
<dbReference type="GeneID" id="329384"/>
<dbReference type="KEGG" id="mmu:329384"/>
<dbReference type="UCSC" id="uc008jgx.1">
    <property type="organism name" value="mouse"/>
</dbReference>
<dbReference type="AGR" id="MGI:1913779"/>
<dbReference type="CTD" id="138428"/>
<dbReference type="MGI" id="MGI:1913779">
    <property type="gene designation" value="Ptrh1"/>
</dbReference>
<dbReference type="VEuPathDB" id="HostDB:ENSMUSG00000053746"/>
<dbReference type="eggNOG" id="KOG2255">
    <property type="taxonomic scope" value="Eukaryota"/>
</dbReference>
<dbReference type="GeneTree" id="ENSGT00390000004247"/>
<dbReference type="HOGENOM" id="CLU_062456_2_2_1"/>
<dbReference type="InParanoid" id="Q8BW00"/>
<dbReference type="OMA" id="PNTYMNL"/>
<dbReference type="OrthoDB" id="1711136at2759"/>
<dbReference type="PhylomeDB" id="Q8BW00"/>
<dbReference type="TreeFam" id="TF332601"/>
<dbReference type="BioGRID-ORCS" id="329384">
    <property type="hits" value="2 hits in 77 CRISPR screens"/>
</dbReference>
<dbReference type="ChiTaRS" id="Ptrh1">
    <property type="organism name" value="mouse"/>
</dbReference>
<dbReference type="PRO" id="PR:Q8BW00"/>
<dbReference type="Proteomes" id="UP000000589">
    <property type="component" value="Chromosome 2"/>
</dbReference>
<dbReference type="RNAct" id="Q8BW00">
    <property type="molecule type" value="protein"/>
</dbReference>
<dbReference type="Bgee" id="ENSMUSG00000053746">
    <property type="expression patterns" value="Expressed in decidua and 147 other cell types or tissues"/>
</dbReference>
<dbReference type="GO" id="GO:0005739">
    <property type="term" value="C:mitochondrion"/>
    <property type="evidence" value="ECO:0007005"/>
    <property type="project" value="MGI"/>
</dbReference>
<dbReference type="GO" id="GO:0004045">
    <property type="term" value="F:peptidyl-tRNA hydrolase activity"/>
    <property type="evidence" value="ECO:0000250"/>
    <property type="project" value="UniProtKB"/>
</dbReference>
<dbReference type="GO" id="GO:0000049">
    <property type="term" value="F:tRNA binding"/>
    <property type="evidence" value="ECO:0007669"/>
    <property type="project" value="UniProtKB-KW"/>
</dbReference>
<dbReference type="GO" id="GO:0072344">
    <property type="term" value="P:rescue of stalled ribosome"/>
    <property type="evidence" value="ECO:0000250"/>
    <property type="project" value="UniProtKB"/>
</dbReference>
<dbReference type="CDD" id="cd00462">
    <property type="entry name" value="PTH"/>
    <property type="match status" value="1"/>
</dbReference>
<dbReference type="FunFam" id="3.40.50.1470:FF:000003">
    <property type="entry name" value="Peptidyl-tRNA hydrolase 1 homolog"/>
    <property type="match status" value="1"/>
</dbReference>
<dbReference type="Gene3D" id="3.40.50.1470">
    <property type="entry name" value="Peptidyl-tRNA hydrolase"/>
    <property type="match status" value="1"/>
</dbReference>
<dbReference type="InterPro" id="IPR001328">
    <property type="entry name" value="Pept_tRNA_hydro"/>
</dbReference>
<dbReference type="InterPro" id="IPR018171">
    <property type="entry name" value="Pept_tRNA_hydro_CS"/>
</dbReference>
<dbReference type="InterPro" id="IPR036416">
    <property type="entry name" value="Pept_tRNA_hydro_sf"/>
</dbReference>
<dbReference type="NCBIfam" id="TIGR00447">
    <property type="entry name" value="pth"/>
    <property type="match status" value="1"/>
</dbReference>
<dbReference type="PANTHER" id="PTHR17224">
    <property type="entry name" value="PEPTIDYL-TRNA HYDROLASE"/>
    <property type="match status" value="1"/>
</dbReference>
<dbReference type="PANTHER" id="PTHR17224:SF1">
    <property type="entry name" value="PEPTIDYL-TRNA HYDROLASE"/>
    <property type="match status" value="1"/>
</dbReference>
<dbReference type="Pfam" id="PF01195">
    <property type="entry name" value="Pept_tRNA_hydro"/>
    <property type="match status" value="1"/>
</dbReference>
<dbReference type="SUPFAM" id="SSF53178">
    <property type="entry name" value="Peptidyl-tRNA hydrolase-like"/>
    <property type="match status" value="1"/>
</dbReference>
<dbReference type="PROSITE" id="PS01196">
    <property type="entry name" value="PEPT_TRNA_HYDROL_2"/>
    <property type="match status" value="1"/>
</dbReference>
<keyword id="KW-0378">Hydrolase</keyword>
<keyword id="KW-1185">Reference proteome</keyword>
<keyword id="KW-0694">RNA-binding</keyword>
<keyword id="KW-0820">tRNA-binding</keyword>
<protein>
    <recommendedName>
        <fullName evidence="3">Probable peptidyl-tRNA hydrolase</fullName>
        <shortName>PTH</shortName>
        <ecNumber evidence="2">3.1.1.29</ecNumber>
    </recommendedName>
</protein>
<organism>
    <name type="scientific">Mus musculus</name>
    <name type="common">Mouse</name>
    <dbReference type="NCBI Taxonomy" id="10090"/>
    <lineage>
        <taxon>Eukaryota</taxon>
        <taxon>Metazoa</taxon>
        <taxon>Chordata</taxon>
        <taxon>Craniata</taxon>
        <taxon>Vertebrata</taxon>
        <taxon>Euteleostomi</taxon>
        <taxon>Mammalia</taxon>
        <taxon>Eutheria</taxon>
        <taxon>Euarchontoglires</taxon>
        <taxon>Glires</taxon>
        <taxon>Rodentia</taxon>
        <taxon>Myomorpha</taxon>
        <taxon>Muroidea</taxon>
        <taxon>Muridae</taxon>
        <taxon>Murinae</taxon>
        <taxon>Mus</taxon>
        <taxon>Mus</taxon>
    </lineage>
</organism>
<reference key="1">
    <citation type="journal article" date="2005" name="Science">
        <title>The transcriptional landscape of the mammalian genome.</title>
        <authorList>
            <person name="Carninci P."/>
            <person name="Kasukawa T."/>
            <person name="Katayama S."/>
            <person name="Gough J."/>
            <person name="Frith M.C."/>
            <person name="Maeda N."/>
            <person name="Oyama R."/>
            <person name="Ravasi T."/>
            <person name="Lenhard B."/>
            <person name="Wells C."/>
            <person name="Kodzius R."/>
            <person name="Shimokawa K."/>
            <person name="Bajic V.B."/>
            <person name="Brenner S.E."/>
            <person name="Batalov S."/>
            <person name="Forrest A.R."/>
            <person name="Zavolan M."/>
            <person name="Davis M.J."/>
            <person name="Wilming L.G."/>
            <person name="Aidinis V."/>
            <person name="Allen J.E."/>
            <person name="Ambesi-Impiombato A."/>
            <person name="Apweiler R."/>
            <person name="Aturaliya R.N."/>
            <person name="Bailey T.L."/>
            <person name="Bansal M."/>
            <person name="Baxter L."/>
            <person name="Beisel K.W."/>
            <person name="Bersano T."/>
            <person name="Bono H."/>
            <person name="Chalk A.M."/>
            <person name="Chiu K.P."/>
            <person name="Choudhary V."/>
            <person name="Christoffels A."/>
            <person name="Clutterbuck D.R."/>
            <person name="Crowe M.L."/>
            <person name="Dalla E."/>
            <person name="Dalrymple B.P."/>
            <person name="de Bono B."/>
            <person name="Della Gatta G."/>
            <person name="di Bernardo D."/>
            <person name="Down T."/>
            <person name="Engstrom P."/>
            <person name="Fagiolini M."/>
            <person name="Faulkner G."/>
            <person name="Fletcher C.F."/>
            <person name="Fukushima T."/>
            <person name="Furuno M."/>
            <person name="Futaki S."/>
            <person name="Gariboldi M."/>
            <person name="Georgii-Hemming P."/>
            <person name="Gingeras T.R."/>
            <person name="Gojobori T."/>
            <person name="Green R.E."/>
            <person name="Gustincich S."/>
            <person name="Harbers M."/>
            <person name="Hayashi Y."/>
            <person name="Hensch T.K."/>
            <person name="Hirokawa N."/>
            <person name="Hill D."/>
            <person name="Huminiecki L."/>
            <person name="Iacono M."/>
            <person name="Ikeo K."/>
            <person name="Iwama A."/>
            <person name="Ishikawa T."/>
            <person name="Jakt M."/>
            <person name="Kanapin A."/>
            <person name="Katoh M."/>
            <person name="Kawasawa Y."/>
            <person name="Kelso J."/>
            <person name="Kitamura H."/>
            <person name="Kitano H."/>
            <person name="Kollias G."/>
            <person name="Krishnan S.P."/>
            <person name="Kruger A."/>
            <person name="Kummerfeld S.K."/>
            <person name="Kurochkin I.V."/>
            <person name="Lareau L.F."/>
            <person name="Lazarevic D."/>
            <person name="Lipovich L."/>
            <person name="Liu J."/>
            <person name="Liuni S."/>
            <person name="McWilliam S."/>
            <person name="Madan Babu M."/>
            <person name="Madera M."/>
            <person name="Marchionni L."/>
            <person name="Matsuda H."/>
            <person name="Matsuzawa S."/>
            <person name="Miki H."/>
            <person name="Mignone F."/>
            <person name="Miyake S."/>
            <person name="Morris K."/>
            <person name="Mottagui-Tabar S."/>
            <person name="Mulder N."/>
            <person name="Nakano N."/>
            <person name="Nakauchi H."/>
            <person name="Ng P."/>
            <person name="Nilsson R."/>
            <person name="Nishiguchi S."/>
            <person name="Nishikawa S."/>
            <person name="Nori F."/>
            <person name="Ohara O."/>
            <person name="Okazaki Y."/>
            <person name="Orlando V."/>
            <person name="Pang K.C."/>
            <person name="Pavan W.J."/>
            <person name="Pavesi G."/>
            <person name="Pesole G."/>
            <person name="Petrovsky N."/>
            <person name="Piazza S."/>
            <person name="Reed J."/>
            <person name="Reid J.F."/>
            <person name="Ring B.Z."/>
            <person name="Ringwald M."/>
            <person name="Rost B."/>
            <person name="Ruan Y."/>
            <person name="Salzberg S.L."/>
            <person name="Sandelin A."/>
            <person name="Schneider C."/>
            <person name="Schoenbach C."/>
            <person name="Sekiguchi K."/>
            <person name="Semple C.A."/>
            <person name="Seno S."/>
            <person name="Sessa L."/>
            <person name="Sheng Y."/>
            <person name="Shibata Y."/>
            <person name="Shimada H."/>
            <person name="Shimada K."/>
            <person name="Silva D."/>
            <person name="Sinclair B."/>
            <person name="Sperling S."/>
            <person name="Stupka E."/>
            <person name="Sugiura K."/>
            <person name="Sultana R."/>
            <person name="Takenaka Y."/>
            <person name="Taki K."/>
            <person name="Tammoja K."/>
            <person name="Tan S.L."/>
            <person name="Tang S."/>
            <person name="Taylor M.S."/>
            <person name="Tegner J."/>
            <person name="Teichmann S.A."/>
            <person name="Ueda H.R."/>
            <person name="van Nimwegen E."/>
            <person name="Verardo R."/>
            <person name="Wei C.L."/>
            <person name="Yagi K."/>
            <person name="Yamanishi H."/>
            <person name="Zabarovsky E."/>
            <person name="Zhu S."/>
            <person name="Zimmer A."/>
            <person name="Hide W."/>
            <person name="Bult C."/>
            <person name="Grimmond S.M."/>
            <person name="Teasdale R.D."/>
            <person name="Liu E.T."/>
            <person name="Brusic V."/>
            <person name="Quackenbush J."/>
            <person name="Wahlestedt C."/>
            <person name="Mattick J.S."/>
            <person name="Hume D.A."/>
            <person name="Kai C."/>
            <person name="Sasaki D."/>
            <person name="Tomaru Y."/>
            <person name="Fukuda S."/>
            <person name="Kanamori-Katayama M."/>
            <person name="Suzuki M."/>
            <person name="Aoki J."/>
            <person name="Arakawa T."/>
            <person name="Iida J."/>
            <person name="Imamura K."/>
            <person name="Itoh M."/>
            <person name="Kato T."/>
            <person name="Kawaji H."/>
            <person name="Kawagashira N."/>
            <person name="Kawashima T."/>
            <person name="Kojima M."/>
            <person name="Kondo S."/>
            <person name="Konno H."/>
            <person name="Nakano K."/>
            <person name="Ninomiya N."/>
            <person name="Nishio T."/>
            <person name="Okada M."/>
            <person name="Plessy C."/>
            <person name="Shibata K."/>
            <person name="Shiraki T."/>
            <person name="Suzuki S."/>
            <person name="Tagami M."/>
            <person name="Waki K."/>
            <person name="Watahiki A."/>
            <person name="Okamura-Oho Y."/>
            <person name="Suzuki H."/>
            <person name="Kawai J."/>
            <person name="Hayashizaki Y."/>
        </authorList>
    </citation>
    <scope>NUCLEOTIDE SEQUENCE [LARGE SCALE MRNA]</scope>
    <source>
        <strain>C57BL/6J</strain>
        <tissue>Stomach</tissue>
    </source>
</reference>
<reference key="2">
    <citation type="journal article" date="2004" name="Genome Res.">
        <title>The status, quality, and expansion of the NIH full-length cDNA project: the Mammalian Gene Collection (MGC).</title>
        <authorList>
            <consortium name="The MGC Project Team"/>
        </authorList>
    </citation>
    <scope>NUCLEOTIDE SEQUENCE [LARGE SCALE MRNA]</scope>
    <source>
        <tissue>Mammary gland</tissue>
    </source>
</reference>
<evidence type="ECO:0000250" key="1">
    <source>
        <dbReference type="UniProtKB" id="P0A7D1"/>
    </source>
</evidence>
<evidence type="ECO:0000250" key="2">
    <source>
        <dbReference type="UniProtKB" id="Q86Y79"/>
    </source>
</evidence>
<evidence type="ECO:0000305" key="3"/>
<evidence type="ECO:0000312" key="4">
    <source>
        <dbReference type="MGI" id="MGI:1913779"/>
    </source>
</evidence>
<sequence>MRRSWALSRQVSEARFPGKRWLVAGLGNHGMPGTRHSVGMAVLGQIARRLGVAENWTRDSRCAADLALAPLGDAQLVLLRPRRLMNVNGRSVARAAELFGLTAEEIYLVHDELDKPLGKLALKLGGSARGHNGVRSCISCLNSNAMPRLLVGIGRPTHPNMVENHVLGCFSPEEQELLSPLMDQATDLLLDHIRARSQGPLSGL</sequence>